<gene>
    <name evidence="1" type="primary">lpxD</name>
    <name type="ordered locus">RF_0008</name>
</gene>
<keyword id="KW-0012">Acyltransferase</keyword>
<keyword id="KW-0441">Lipid A biosynthesis</keyword>
<keyword id="KW-0444">Lipid biosynthesis</keyword>
<keyword id="KW-0443">Lipid metabolism</keyword>
<keyword id="KW-0677">Repeat</keyword>
<keyword id="KW-0808">Transferase</keyword>
<accession>Q4UNJ8</accession>
<organism>
    <name type="scientific">Rickettsia felis (strain ATCC VR-1525 / URRWXCal2)</name>
    <name type="common">Rickettsia azadi</name>
    <dbReference type="NCBI Taxonomy" id="315456"/>
    <lineage>
        <taxon>Bacteria</taxon>
        <taxon>Pseudomonadati</taxon>
        <taxon>Pseudomonadota</taxon>
        <taxon>Alphaproteobacteria</taxon>
        <taxon>Rickettsiales</taxon>
        <taxon>Rickettsiaceae</taxon>
        <taxon>Rickettsieae</taxon>
        <taxon>Rickettsia</taxon>
        <taxon>spotted fever group</taxon>
    </lineage>
</organism>
<dbReference type="EC" id="2.3.1.191" evidence="1"/>
<dbReference type="EMBL" id="CP000053">
    <property type="protein sequence ID" value="AAY60859.1"/>
    <property type="molecule type" value="Genomic_DNA"/>
</dbReference>
<dbReference type="SMR" id="Q4UNJ8"/>
<dbReference type="STRING" id="315456.RF_0008"/>
<dbReference type="KEGG" id="rfe:RF_0008"/>
<dbReference type="eggNOG" id="COG1044">
    <property type="taxonomic scope" value="Bacteria"/>
</dbReference>
<dbReference type="HOGENOM" id="CLU_049865_0_0_5"/>
<dbReference type="OrthoDB" id="9784739at2"/>
<dbReference type="UniPathway" id="UPA00973"/>
<dbReference type="Proteomes" id="UP000008548">
    <property type="component" value="Chromosome"/>
</dbReference>
<dbReference type="GO" id="GO:0016020">
    <property type="term" value="C:membrane"/>
    <property type="evidence" value="ECO:0007669"/>
    <property type="project" value="GOC"/>
</dbReference>
<dbReference type="GO" id="GO:0016410">
    <property type="term" value="F:N-acyltransferase activity"/>
    <property type="evidence" value="ECO:0007669"/>
    <property type="project" value="InterPro"/>
</dbReference>
<dbReference type="GO" id="GO:0009245">
    <property type="term" value="P:lipid A biosynthetic process"/>
    <property type="evidence" value="ECO:0007669"/>
    <property type="project" value="UniProtKB-UniRule"/>
</dbReference>
<dbReference type="CDD" id="cd03352">
    <property type="entry name" value="LbH_LpxD"/>
    <property type="match status" value="1"/>
</dbReference>
<dbReference type="Gene3D" id="2.160.10.10">
    <property type="entry name" value="Hexapeptide repeat proteins"/>
    <property type="match status" value="1"/>
</dbReference>
<dbReference type="Gene3D" id="3.40.1390.10">
    <property type="entry name" value="MurE/MurF, N-terminal domain"/>
    <property type="match status" value="1"/>
</dbReference>
<dbReference type="HAMAP" id="MF_00523">
    <property type="entry name" value="LpxD"/>
    <property type="match status" value="1"/>
</dbReference>
<dbReference type="InterPro" id="IPR001451">
    <property type="entry name" value="Hexapep"/>
</dbReference>
<dbReference type="InterPro" id="IPR018357">
    <property type="entry name" value="Hexapep_transf_CS"/>
</dbReference>
<dbReference type="InterPro" id="IPR007691">
    <property type="entry name" value="LpxD"/>
</dbReference>
<dbReference type="InterPro" id="IPR011004">
    <property type="entry name" value="Trimer_LpxA-like_sf"/>
</dbReference>
<dbReference type="InterPro" id="IPR020573">
    <property type="entry name" value="UDP_GlcNAc_AcTrfase_non-rep"/>
</dbReference>
<dbReference type="NCBIfam" id="TIGR01853">
    <property type="entry name" value="lipid_A_lpxD"/>
    <property type="match status" value="1"/>
</dbReference>
<dbReference type="NCBIfam" id="NF002060">
    <property type="entry name" value="PRK00892.1"/>
    <property type="match status" value="1"/>
</dbReference>
<dbReference type="PANTHER" id="PTHR43378">
    <property type="entry name" value="UDP-3-O-ACYLGLUCOSAMINE N-ACYLTRANSFERASE"/>
    <property type="match status" value="1"/>
</dbReference>
<dbReference type="PANTHER" id="PTHR43378:SF2">
    <property type="entry name" value="UDP-3-O-ACYLGLUCOSAMINE N-ACYLTRANSFERASE 1, MITOCHONDRIAL-RELATED"/>
    <property type="match status" value="1"/>
</dbReference>
<dbReference type="Pfam" id="PF00132">
    <property type="entry name" value="Hexapep"/>
    <property type="match status" value="2"/>
</dbReference>
<dbReference type="Pfam" id="PF04613">
    <property type="entry name" value="LpxD"/>
    <property type="match status" value="1"/>
</dbReference>
<dbReference type="SUPFAM" id="SSF51161">
    <property type="entry name" value="Trimeric LpxA-like enzymes"/>
    <property type="match status" value="1"/>
</dbReference>
<dbReference type="PROSITE" id="PS00101">
    <property type="entry name" value="HEXAPEP_TRANSFERASES"/>
    <property type="match status" value="2"/>
</dbReference>
<name>LPXD_RICFE</name>
<reference key="1">
    <citation type="journal article" date="2005" name="PLoS Biol.">
        <title>The genome sequence of Rickettsia felis identifies the first putative conjugative plasmid in an obligate intracellular parasite.</title>
        <authorList>
            <person name="Ogata H."/>
            <person name="Renesto P."/>
            <person name="Audic S."/>
            <person name="Robert C."/>
            <person name="Blanc G."/>
            <person name="Fournier P.-E."/>
            <person name="Parinello H."/>
            <person name="Claverie J.-M."/>
            <person name="Raoult D."/>
        </authorList>
    </citation>
    <scope>NUCLEOTIDE SEQUENCE [LARGE SCALE GENOMIC DNA]</scope>
    <source>
        <strain>ATCC VR-1525 / URRWXCal2</strain>
    </source>
</reference>
<sequence length="346" mass="37023">MVSSNFYKNLGPRKLTAIIDFLHDIIEPPKIHEDIAIHDIKILQEASPNDISFLSNPKYSEFLKTTKAAACIVPKNFTGEANPNTVLIHAENSYFAYGKLIDFFYTPIKSYPAKIMKSAIVADSATIGKNCYIGHNVVIEDDVIIGDNSIIEAGSFIGRGVTIGRNARIEQHVSINYTIIGDEVVILAGAKIGQDGFGFSTEKGVHHKIFHIGIVKIGNNVEIGSNITIDRGSLQDTIIEDLCRIDNLVQIGHGVKIGKGSIIVAQAGIAGSSTIGKYCALGGQVGIAGHLNIGDGTQVAAQGGVAQNIEAGKIVGGSPAVPIMDWHRQSIIMKQLVKTSNSKLKK</sequence>
<comment type="function">
    <text evidence="1">Catalyzes the N-acylation of UDP-3-O-acylglucosamine using 3-hydroxyacyl-ACP as the acyl donor. Is involved in the biosynthesis of lipid A, a phosphorylated glycolipid that anchors the lipopolysaccharide to the outer membrane of the cell.</text>
</comment>
<comment type="catalytic activity">
    <reaction evidence="1">
        <text>a UDP-3-O-[(3R)-3-hydroxyacyl]-alpha-D-glucosamine + a (3R)-hydroxyacyl-[ACP] = a UDP-2-N,3-O-bis[(3R)-3-hydroxyacyl]-alpha-D-glucosamine + holo-[ACP] + H(+)</text>
        <dbReference type="Rhea" id="RHEA:53836"/>
        <dbReference type="Rhea" id="RHEA-COMP:9685"/>
        <dbReference type="Rhea" id="RHEA-COMP:9945"/>
        <dbReference type="ChEBI" id="CHEBI:15378"/>
        <dbReference type="ChEBI" id="CHEBI:64479"/>
        <dbReference type="ChEBI" id="CHEBI:78827"/>
        <dbReference type="ChEBI" id="CHEBI:137740"/>
        <dbReference type="ChEBI" id="CHEBI:137748"/>
        <dbReference type="EC" id="2.3.1.191"/>
    </reaction>
</comment>
<comment type="pathway">
    <text evidence="1">Bacterial outer membrane biogenesis; LPS lipid A biosynthesis.</text>
</comment>
<comment type="subunit">
    <text evidence="1">Homotrimer.</text>
</comment>
<comment type="similarity">
    <text evidence="1">Belongs to the transferase hexapeptide repeat family. LpxD subfamily.</text>
</comment>
<feature type="chain" id="PRO_0000264430" description="UDP-3-O-acylglucosamine N-acyltransferase">
    <location>
        <begin position="1"/>
        <end position="346"/>
    </location>
</feature>
<feature type="active site" description="Proton acceptor" evidence="1">
    <location>
        <position position="253"/>
    </location>
</feature>
<proteinExistence type="inferred from homology"/>
<evidence type="ECO:0000255" key="1">
    <source>
        <dbReference type="HAMAP-Rule" id="MF_00523"/>
    </source>
</evidence>
<protein>
    <recommendedName>
        <fullName evidence="1">UDP-3-O-acylglucosamine N-acyltransferase</fullName>
        <ecNumber evidence="1">2.3.1.191</ecNumber>
    </recommendedName>
</protein>